<proteinExistence type="evidence at protein level"/>
<keyword id="KW-0025">Alternative splicing</keyword>
<keyword id="KW-0539">Nucleus</keyword>
<keyword id="KW-1185">Reference proteome</keyword>
<gene>
    <name evidence="8 12" type="primary">dao-5</name>
    <name evidence="12" type="ORF">C25A1.10</name>
</gene>
<dbReference type="EMBL" id="BX284601">
    <property type="protein sequence ID" value="CAB02755.1"/>
    <property type="molecule type" value="Genomic_DNA"/>
</dbReference>
<dbReference type="EMBL" id="BX284601">
    <property type="protein sequence ID" value="CAI79153.1"/>
    <property type="molecule type" value="Genomic_DNA"/>
</dbReference>
<dbReference type="PIR" id="T19431">
    <property type="entry name" value="T19431"/>
</dbReference>
<dbReference type="RefSeq" id="NP_001021004.1">
    <molecule id="Q9XVS4-1"/>
    <property type="nucleotide sequence ID" value="NM_001025833.10"/>
</dbReference>
<dbReference type="RefSeq" id="NP_001021005.1">
    <molecule id="Q9XVS4-2"/>
    <property type="nucleotide sequence ID" value="NM_001025834.6"/>
</dbReference>
<dbReference type="FunCoup" id="Q9XVS4">
    <property type="interactions" value="521"/>
</dbReference>
<dbReference type="STRING" id="6239.C25A1.10a.2"/>
<dbReference type="PaxDb" id="6239-C25A1.10a"/>
<dbReference type="PeptideAtlas" id="Q9XVS4"/>
<dbReference type="EnsemblMetazoa" id="C25A1.10a.1">
    <molecule id="Q9XVS4-1"/>
    <property type="protein sequence ID" value="C25A1.10a.1"/>
    <property type="gene ID" value="WBGene00000931"/>
</dbReference>
<dbReference type="EnsemblMetazoa" id="C25A1.10b.1">
    <molecule id="Q9XVS4-2"/>
    <property type="protein sequence ID" value="C25A1.10b.1"/>
    <property type="gene ID" value="WBGene00000931"/>
</dbReference>
<dbReference type="GeneID" id="266845"/>
<dbReference type="KEGG" id="cel:CELE_C25A1.10"/>
<dbReference type="UCSC" id="C25A1.10a">
    <property type="organism name" value="c. elegans"/>
</dbReference>
<dbReference type="AGR" id="WB:WBGene00000931"/>
<dbReference type="CTD" id="266845"/>
<dbReference type="WormBase" id="C25A1.10a">
    <molecule id="Q9XVS4-1"/>
    <property type="protein sequence ID" value="CE08376"/>
    <property type="gene ID" value="WBGene00000931"/>
    <property type="gene designation" value="dao-5"/>
</dbReference>
<dbReference type="WormBase" id="C25A1.10b">
    <molecule id="Q9XVS4-2"/>
    <property type="protein sequence ID" value="CE38279"/>
    <property type="gene ID" value="WBGene00000931"/>
    <property type="gene designation" value="dao-5"/>
</dbReference>
<dbReference type="eggNOG" id="KOG2992">
    <property type="taxonomic scope" value="Eukaryota"/>
</dbReference>
<dbReference type="GeneTree" id="ENSGT00730000111092"/>
<dbReference type="HOGENOM" id="CLU_299803_0_0_1"/>
<dbReference type="InParanoid" id="Q9XVS4"/>
<dbReference type="OMA" id="DQWGQRA"/>
<dbReference type="OrthoDB" id="5599646at2759"/>
<dbReference type="PRO" id="PR:Q9XVS4"/>
<dbReference type="Proteomes" id="UP000001940">
    <property type="component" value="Chromosome I"/>
</dbReference>
<dbReference type="Bgee" id="WBGene00000931">
    <property type="expression patterns" value="Expressed in embryo and 4 other cell types or tissues"/>
</dbReference>
<dbReference type="GO" id="GO:0005730">
    <property type="term" value="C:nucleolus"/>
    <property type="evidence" value="ECO:0000314"/>
    <property type="project" value="WormBase"/>
</dbReference>
<dbReference type="GO" id="GO:0005654">
    <property type="term" value="C:nucleoplasm"/>
    <property type="evidence" value="ECO:0000314"/>
    <property type="project" value="WormBase"/>
</dbReference>
<dbReference type="GO" id="GO:0000182">
    <property type="term" value="F:rDNA binding"/>
    <property type="evidence" value="ECO:0000314"/>
    <property type="project" value="UniProtKB"/>
</dbReference>
<dbReference type="GO" id="GO:0001042">
    <property type="term" value="F:RNA polymerase I core binding"/>
    <property type="evidence" value="ECO:0000314"/>
    <property type="project" value="WormBase"/>
</dbReference>
<dbReference type="GO" id="GO:0040024">
    <property type="term" value="P:dauer larval development"/>
    <property type="evidence" value="ECO:0000304"/>
    <property type="project" value="WormBase"/>
</dbReference>
<dbReference type="GO" id="GO:0008340">
    <property type="term" value="P:determination of adult lifespan"/>
    <property type="evidence" value="ECO:0000316"/>
    <property type="project" value="WormBase"/>
</dbReference>
<dbReference type="GO" id="GO:0008286">
    <property type="term" value="P:insulin receptor signaling pathway"/>
    <property type="evidence" value="ECO:0000316"/>
    <property type="project" value="WormBase"/>
</dbReference>
<dbReference type="GO" id="GO:0042790">
    <property type="term" value="P:nucleolar large rRNA transcription by RNA polymerase I"/>
    <property type="evidence" value="ECO:0000315"/>
    <property type="project" value="UniProtKB"/>
</dbReference>
<dbReference type="GO" id="GO:0061187">
    <property type="term" value="P:regulation of rDNA heterochromatin formation"/>
    <property type="evidence" value="ECO:0000315"/>
    <property type="project" value="UniProtKB"/>
</dbReference>
<dbReference type="GO" id="GO:0009303">
    <property type="term" value="P:rRNA transcription"/>
    <property type="evidence" value="ECO:0000315"/>
    <property type="project" value="WormBase"/>
</dbReference>
<dbReference type="InterPro" id="IPR039191">
    <property type="entry name" value="Nopp140-like"/>
</dbReference>
<dbReference type="InterPro" id="IPR007718">
    <property type="entry name" value="Srp40_C"/>
</dbReference>
<dbReference type="PANTHER" id="PTHR23216">
    <property type="entry name" value="NUCLEOLAR AND COILED-BODY PHOSPHOPROTEIN 1"/>
    <property type="match status" value="1"/>
</dbReference>
<dbReference type="PANTHER" id="PTHR23216:SF1">
    <property type="entry name" value="NUCLEOLAR AND COILED-BODY PHOSPHOPROTEIN 1"/>
    <property type="match status" value="1"/>
</dbReference>
<dbReference type="Pfam" id="PF05022">
    <property type="entry name" value="SRP40_C"/>
    <property type="match status" value="1"/>
</dbReference>
<dbReference type="PRINTS" id="PR01503">
    <property type="entry name" value="TREACLE"/>
</dbReference>
<accession>Q9XVS4</accession>
<accession>Q564W7</accession>
<sequence>MSSDLYANAVLYSEISQRNPELVSKMFNEATRKKLDAFLKDNEAPKLKDIVTDNVFKKRKRIASSSGNEPPVKKMAAKDSSDSDSSDDGAVKKNGVQKPVNVAAKKSATPVQKKAESSSSSDSDAPAKKLTPVKKPAQTPAQKKAASSSDSDSDDEPPKKAPAVTTKVAPKPMAKKQDTSDSDSDSEDSDDGKSKKANPVKVTPVANVLQKVVAKKAASSSSDSSDDEKKPAAKPTPAKPTPKPVVKKAESSSDSSDDEKKPVAKPAPAKATPKPAAKKADSSSDSSDDEAPAKKTPAKAAPKPVAKKAESSSDSSDDEKKPAAKPTPAKATPKPVAKKAESSSDSSDDEKKPVAKPAPAKATPKPVAKKAESSSDSSDDEKKPAAKPTPAKATPKPVAKKAESSSDSSDDEKKPVAKPTSAKATPKPAAKKADSSSDSSDDEAPAKKTPAKAAPKPASKKAESSSDSSDDEKPAAKSTPAKITPKPTAKKVASSSSDSSDDEKKPAAKPTPANATPKPVAKKAESSSDSSDDEKKPVAKPTSAKATPKPAAKKADLSSDFSDDEAPAKKTPAKAAPKPASKKAESSSDSSDDEKPAAKSTPAKTTPKPTAKKAASSSSDSSDDEKKPVAKPTSAKATPKPAAKKADSSSDSSDDEAPAKKTPVKPTPVKIVAKKVDSSSDSSDDEKKPTKATPVKVTPKSVTKKAAASSSDSSDDEKKPVVKQTPNVVPKKEKAASSSDDSSDDEKKPTAKPTPKATPKQSAKKADSSDDSSDDEAPAKKTPAKSTPAKTAVKKEASSSSDDSSDDEKTKKKSATTPAKSTPKTALKKAESSDSSDDDEDLPKPSKAVTPRPQRADSEESAETEESSSRTPALKAKPLATSTEKAVYENRKRKSSPFRRVQMTKDSVSEKFRNNQHDSHFDQWGQRANESLGKVVGKAFRHEKTKKKKGSYGGGPINQSINSIKFSDSDD</sequence>
<reference evidence="11" key="1">
    <citation type="journal article" date="1998" name="Science">
        <title>Genome sequence of the nematode C. elegans: a platform for investigating biology.</title>
        <authorList>
            <consortium name="The C. elegans sequencing consortium"/>
        </authorList>
    </citation>
    <scope>NUCLEOTIDE SEQUENCE [LARGE SCALE GENOMIC DNA]</scope>
    <source>
        <strain evidence="11">Bristol N2</strain>
    </source>
</reference>
<reference evidence="9" key="2">
    <citation type="journal article" date="2001" name="J. Mol. Biol.">
        <title>DAF-16-dependent and independent expression targets of DAF-2 insulin receptor-like pathway in Caenorhabditis elegans include FKBPs.</title>
        <authorList>
            <person name="Yu H."/>
            <person name="Larsen P.L."/>
        </authorList>
    </citation>
    <scope>FUNCTION</scope>
    <scope>DEVELOPMENTAL STAGE</scope>
</reference>
<reference evidence="9" key="3">
    <citation type="journal article" date="2010" name="PLoS ONE">
        <title>A monoclonal antibody toolkit for C. elegans.</title>
        <authorList>
            <person name="Hadwiger G."/>
            <person name="Dour S."/>
            <person name="Arur S."/>
            <person name="Fox P."/>
            <person name="Nonet M.L."/>
        </authorList>
    </citation>
    <scope>SUBUNIT</scope>
    <scope>SUBCELLULAR LOCATION</scope>
    <scope>TISSUE SPECIFICITY</scope>
</reference>
<reference evidence="9" key="4">
    <citation type="journal article" date="2012" name="PLoS ONE">
        <title>Nucleologenesis in the Caenorhabditis elegans embryo.</title>
        <authorList>
            <person name="Korcekova D."/>
            <person name="Gombitova A."/>
            <person name="Raska I."/>
            <person name="Cmarko D."/>
            <person name="Lanctot C."/>
        </authorList>
    </citation>
    <scope>SUBCELLULAR LOCATION</scope>
    <scope>DEVELOPMENTAL STAGE</scope>
</reference>
<reference evidence="9" key="5">
    <citation type="journal article" date="2014" name="Cell Death Dis.">
        <title>Mutation of a Nopp140 gene dao-5 alters rDNA transcription and increases germ cell apoptosis in C. elegans.</title>
        <authorList>
            <person name="Lee C.C."/>
            <person name="Tsai Y.T."/>
            <person name="Kao C.W."/>
            <person name="Lee L.W."/>
            <person name="Lai H.J."/>
            <person name="Ma T.H."/>
            <person name="Chang Y.S."/>
            <person name="Yeh N.H."/>
            <person name="Lo S.J."/>
        </authorList>
    </citation>
    <scope>FUNCTION</scope>
    <scope>INTERACTION WITH RNA POLYMERASE I</scope>
    <scope>SUBCELLULAR LOCATION</scope>
    <scope>TISSUE SPECIFICITY</scope>
</reference>
<reference evidence="9" key="6">
    <citation type="journal article" date="2016" name="Nucleus">
        <title>Genetic control of nucleolar size: An evolutionary perspective.</title>
        <authorList>
            <person name="Ma T.H."/>
            <person name="Lee L.W."/>
            <person name="Lee C.C."/>
            <person name="Yi Y.H."/>
            <person name="Chan S.P."/>
            <person name="Tan B.C."/>
            <person name="Lo S.J."/>
        </authorList>
    </citation>
    <scope>FUNCTION</scope>
</reference>
<organism evidence="11">
    <name type="scientific">Caenorhabditis elegans</name>
    <dbReference type="NCBI Taxonomy" id="6239"/>
    <lineage>
        <taxon>Eukaryota</taxon>
        <taxon>Metazoa</taxon>
        <taxon>Ecdysozoa</taxon>
        <taxon>Nematoda</taxon>
        <taxon>Chromadorea</taxon>
        <taxon>Rhabditida</taxon>
        <taxon>Rhabditina</taxon>
        <taxon>Rhabditomorpha</taxon>
        <taxon>Rhabditoidea</taxon>
        <taxon>Rhabditidae</taxon>
        <taxon>Peloderinae</taxon>
        <taxon>Caenorhabditis</taxon>
    </lineage>
</organism>
<name>NOLC1_CAEEL</name>
<feature type="chain" id="PRO_0000445021" description="Nucleolar protein dao-5" evidence="9">
    <location>
        <begin position="1"/>
        <end position="971"/>
    </location>
</feature>
<feature type="region of interest" description="Disordered" evidence="2">
    <location>
        <begin position="61"/>
        <end position="926"/>
    </location>
</feature>
<feature type="region of interest" description="Disordered" evidence="2">
    <location>
        <begin position="938"/>
        <end position="971"/>
    </location>
</feature>
<feature type="compositionally biased region" description="Low complexity" evidence="2">
    <location>
        <begin position="134"/>
        <end position="150"/>
    </location>
</feature>
<feature type="compositionally biased region" description="Acidic residues" evidence="2">
    <location>
        <begin position="180"/>
        <end position="190"/>
    </location>
</feature>
<feature type="compositionally biased region" description="Low complexity" evidence="2">
    <location>
        <begin position="264"/>
        <end position="275"/>
    </location>
</feature>
<feature type="compositionally biased region" description="Low complexity" evidence="2">
    <location>
        <begin position="294"/>
        <end position="304"/>
    </location>
</feature>
<feature type="compositionally biased region" description="Low complexity" evidence="2">
    <location>
        <begin position="324"/>
        <end position="335"/>
    </location>
</feature>
<feature type="compositionally biased region" description="Low complexity" evidence="2">
    <location>
        <begin position="355"/>
        <end position="366"/>
    </location>
</feature>
<feature type="compositionally biased region" description="Low complexity" evidence="2">
    <location>
        <begin position="386"/>
        <end position="397"/>
    </location>
</feature>
<feature type="compositionally biased region" description="Low complexity" evidence="2">
    <location>
        <begin position="417"/>
        <end position="428"/>
    </location>
</feature>
<feature type="compositionally biased region" description="Low complexity" evidence="2">
    <location>
        <begin position="447"/>
        <end position="457"/>
    </location>
</feature>
<feature type="compositionally biased region" description="Low complexity" evidence="2">
    <location>
        <begin position="476"/>
        <end position="498"/>
    </location>
</feature>
<feature type="compositionally biased region" description="Low complexity" evidence="2">
    <location>
        <begin position="508"/>
        <end position="519"/>
    </location>
</feature>
<feature type="compositionally biased region" description="Low complexity" evidence="2">
    <location>
        <begin position="539"/>
        <end position="550"/>
    </location>
</feature>
<feature type="compositionally biased region" description="Low complexity" evidence="2">
    <location>
        <begin position="569"/>
        <end position="579"/>
    </location>
</feature>
<feature type="compositionally biased region" description="Low complexity" evidence="2">
    <location>
        <begin position="598"/>
        <end position="620"/>
    </location>
</feature>
<feature type="compositionally biased region" description="Low complexity" evidence="2">
    <location>
        <begin position="630"/>
        <end position="641"/>
    </location>
</feature>
<feature type="compositionally biased region" description="Low complexity" evidence="2">
    <location>
        <begin position="691"/>
        <end position="712"/>
    </location>
</feature>
<feature type="compositionally biased region" description="Low complexity" evidence="2">
    <location>
        <begin position="751"/>
        <end position="761"/>
    </location>
</feature>
<feature type="compositionally biased region" description="Low complexity" evidence="2">
    <location>
        <begin position="780"/>
        <end position="791"/>
    </location>
</feature>
<feature type="compositionally biased region" description="Low complexity" evidence="2">
    <location>
        <begin position="815"/>
        <end position="825"/>
    </location>
</feature>
<feature type="compositionally biased region" description="Basic and acidic residues" evidence="2">
    <location>
        <begin position="907"/>
        <end position="921"/>
    </location>
</feature>
<feature type="compositionally biased region" description="Basic residues" evidence="2">
    <location>
        <begin position="939"/>
        <end position="950"/>
    </location>
</feature>
<feature type="compositionally biased region" description="Polar residues" evidence="2">
    <location>
        <begin position="957"/>
        <end position="971"/>
    </location>
</feature>
<feature type="splice variant" id="VSP_059730" description="In isoform b." evidence="9">
    <location>
        <begin position="247"/>
        <end position="521"/>
    </location>
</feature>
<comment type="function">
    <text evidence="6 7 10">Nucleolar protein which binds to RNA polymerase I and rDNA and is required for efficient RNA polymerase I-mediated rDNA transcription (PubMed:24722283). Maintains the epigenetically active status of rDNA chromatin which facilitates rDNA transcription and sustains germline development, ensuring fertility (PubMed:24722283). Plays a role in the modulation of nucleolus size (PubMed:27003693). May play a role in the regulation of lifespan (PubMed:11743719).</text>
</comment>
<comment type="subunit">
    <text evidence="4 6">May form dimers (PubMed:20405020). Interacts with RNA polymerase I (PubMed:24722283).</text>
</comment>
<comment type="subcellular location">
    <subcellularLocation>
        <location evidence="4 5 6">Nucleus</location>
        <location evidence="4 5 6">Nucleolus</location>
    </subcellularLocation>
    <subcellularLocation>
        <location evidence="4 5">Nucleus</location>
        <location evidence="4 5">Nucleoplasm</location>
    </subcellularLocation>
    <text evidence="5">Prior to fertilization, during the diakinesis stage of meiotic prophase, transcription ceases and mature oocytes harbor no nucleolus. During this time, localizes to nucleoli of transcriptionally active cells in the rest of the gonad. From the 2-cell stage of embryonic development, localizes to the nucleoplasm. Localizes to nucleoli upon their development in 6- to 8-cell stage embryos. Localizes to the nuclear periphery in developing embryos. In postembryonic cells, predominantly localizes to the nucleolus, but also localizes to small punctate structures throughout the nucleoplasm. Co-localizes with rDNA and fib-1 in nucleoli.</text>
</comment>
<comment type="alternative products">
    <event type="alternative splicing"/>
    <isoform>
        <id>Q9XVS4-1</id>
        <name evidence="12">a</name>
        <sequence type="displayed"/>
    </isoform>
    <isoform>
        <id>Q9XVS4-2</id>
        <name evidence="13">b</name>
        <sequence type="described" ref="VSP_059730"/>
    </isoform>
</comment>
<comment type="tissue specificity">
    <text evidence="4 6">Expressed in the nerve ring and hypodermal tissues (PubMed:24722283). Expressed in the intestine (PubMed:20405020, PubMed:24722283). Expressed in the germline (PubMed:20405020).</text>
</comment>
<comment type="developmental stage">
    <text evidence="3 5">Expressed throughout embryonic development and in adults (PubMed:22768349). During embryogenesis, expressed from the 2-cell stage and persists throughout development in transcriptionally active cells (PubMed:22768349). Expression is higher in dauer larvae than in adults (PubMed:11743719).</text>
</comment>
<comment type="similarity">
    <text evidence="9">Belongs to the NOLC1 family.</text>
</comment>
<protein>
    <recommendedName>
        <fullName evidence="9">Nucleolar protein dao-5</fullName>
    </recommendedName>
    <alternativeName>
        <fullName evidence="1">140 kDa nucleolar phosphoprotein</fullName>
        <shortName evidence="1">Nopp140</shortName>
    </alternativeName>
    <alternativeName>
        <fullName evidence="12">Dauer or aging adult overexpression protein 5</fullName>
    </alternativeName>
</protein>
<evidence type="ECO:0000250" key="1">
    <source>
        <dbReference type="UniProtKB" id="Q14978"/>
    </source>
</evidence>
<evidence type="ECO:0000256" key="2">
    <source>
        <dbReference type="SAM" id="MobiDB-lite"/>
    </source>
</evidence>
<evidence type="ECO:0000269" key="3">
    <source>
    </source>
</evidence>
<evidence type="ECO:0000269" key="4">
    <source>
    </source>
</evidence>
<evidence type="ECO:0000269" key="5">
    <source>
    </source>
</evidence>
<evidence type="ECO:0000269" key="6">
    <source>
    </source>
</evidence>
<evidence type="ECO:0000269" key="7">
    <source>
    </source>
</evidence>
<evidence type="ECO:0000303" key="8">
    <source>
    </source>
</evidence>
<evidence type="ECO:0000305" key="9"/>
<evidence type="ECO:0000305" key="10">
    <source>
    </source>
</evidence>
<evidence type="ECO:0000312" key="11">
    <source>
        <dbReference type="Proteomes" id="UP000001940"/>
    </source>
</evidence>
<evidence type="ECO:0000312" key="12">
    <source>
        <dbReference type="WormBase" id="C25A1.10a"/>
    </source>
</evidence>
<evidence type="ECO:0000312" key="13">
    <source>
        <dbReference type="WormBase" id="C25A1.10b"/>
    </source>
</evidence>